<protein>
    <recommendedName>
        <fullName>Light-harvesting complex I LH35 proteins</fullName>
    </recommendedName>
    <component>
        <recommendedName>
            <fullName>LH35 protein 1</fullName>
        </recommendedName>
    </component>
    <component>
        <recommendedName>
            <fullName>LH35 protein 2</fullName>
        </recommendedName>
    </component>
</protein>
<reference key="1">
    <citation type="journal article" date="1988" name="Mol. Gen. Genet.">
        <title>Characterization of cDNA sequences for LHCI apoproteins in Euglena gracilis: the mRNA encodes a large precursor containing several consecutive divergent polypeptides.</title>
        <authorList>
            <person name="Houlne G."/>
            <person name="Schantz R."/>
        </authorList>
    </citation>
    <scope>NUCLEOTIDE SEQUENCE [MRNA]</scope>
</reference>
<keyword id="KW-0150">Chloroplast</keyword>
<keyword id="KW-0602">Photosynthesis</keyword>
<keyword id="KW-0603">Photosystem I</keyword>
<keyword id="KW-0934">Plastid</keyword>
<feature type="chain" id="PRO_0000029338" description="LH35 protein 1">
    <location>
        <begin position="1" status="less than"/>
        <end position="153"/>
    </location>
</feature>
<feature type="chain" id="PRO_0000029339" description="LH35 protein 2">
    <location>
        <begin position="154"/>
        <end position="331"/>
    </location>
</feature>
<feature type="non-terminal residue">
    <location>
        <position position="1"/>
    </location>
</feature>
<proteinExistence type="evidence at transcript level"/>
<organism>
    <name type="scientific">Euglena gracilis</name>
    <dbReference type="NCBI Taxonomy" id="3039"/>
    <lineage>
        <taxon>Eukaryota</taxon>
        <taxon>Discoba</taxon>
        <taxon>Euglenozoa</taxon>
        <taxon>Euglenida</taxon>
        <taxon>Spirocuta</taxon>
        <taxon>Euglenophyceae</taxon>
        <taxon>Euglenales</taxon>
        <taxon>Euglenaceae</taxon>
        <taxon>Euglena</taxon>
    </lineage>
</organism>
<comment type="subcellular location">
    <subcellularLocation>
        <location>Plastid</location>
        <location>Chloroplast</location>
    </subcellularLocation>
</comment>
<comment type="miscellaneous">
    <text>The LH35 protein is synthesized as a 100 kDa polyprotein and is entirely imported into the chloroplast where it is subsequently cleaved into 5 mature 20 kDa LH35 proteins.</text>
</comment>
<name>LH15_EUGGR</name>
<accession>P08975</accession>
<dbReference type="EMBL" id="X12860">
    <property type="protein sequence ID" value="CAA31337.1"/>
    <property type="molecule type" value="mRNA"/>
</dbReference>
<dbReference type="PIR" id="S01429">
    <property type="entry name" value="S01429"/>
</dbReference>
<dbReference type="SMR" id="P08975"/>
<dbReference type="GO" id="GO:0009507">
    <property type="term" value="C:chloroplast"/>
    <property type="evidence" value="ECO:0007669"/>
    <property type="project" value="UniProtKB-SubCell"/>
</dbReference>
<dbReference type="GO" id="GO:0009522">
    <property type="term" value="C:photosystem I"/>
    <property type="evidence" value="ECO:0007669"/>
    <property type="project" value="UniProtKB-KW"/>
</dbReference>
<dbReference type="GO" id="GO:0009765">
    <property type="term" value="P:photosynthesis, light harvesting"/>
    <property type="evidence" value="ECO:0007669"/>
    <property type="project" value="InterPro"/>
</dbReference>
<dbReference type="Gene3D" id="1.10.3460.10">
    <property type="entry name" value="Chlorophyll a/b binding protein domain"/>
    <property type="match status" value="2"/>
</dbReference>
<dbReference type="InterPro" id="IPR001344">
    <property type="entry name" value="Chloro_AB-bd_pln"/>
</dbReference>
<dbReference type="InterPro" id="IPR022796">
    <property type="entry name" value="Chloroa_b-bind"/>
</dbReference>
<dbReference type="PANTHER" id="PTHR21649">
    <property type="entry name" value="CHLOROPHYLL A/B BINDING PROTEIN"/>
    <property type="match status" value="1"/>
</dbReference>
<dbReference type="Pfam" id="PF00504">
    <property type="entry name" value="Chloroa_b-bind"/>
    <property type="match status" value="2"/>
</dbReference>
<dbReference type="SUPFAM" id="SSF103511">
    <property type="entry name" value="Chlorophyll a-b binding protein"/>
    <property type="match status" value="2"/>
</dbReference>
<sequence>PTVYERMRVAEVFNGRLAMLAIVGCVYPELLGNGVWFEVWNKVDFYRFALISLQVVAPLEYWRGNGGFGWDGEEKYDRSYPGFDPCNLTTEYTKAAEIKNGRLAMIGMFGLEVQNHVTAQGPVANLIEHLRHPLAANIGANLAHPWPPVAMFATTGHKDGVWFPGAQPPAHLTGEYPADRGFDPLSVAADPTVYARMRVSEVFHARLSMLAIVGSIVPELLGKGAWFEVGNSVDGIKLGFILMAIAAPTEYWRGNGGFNWDKGTADRSYPGFDPLKLTTDYTKREIKNGRLAMTGLLGLTFQYLATGESPLANLAAHFANPVGANITTTLA</sequence>